<gene>
    <name evidence="5" type="primary">DFP3</name>
    <name type="ordered locus">YCR007C</name>
    <name type="ORF">YCR045</name>
    <name type="ORF">YCR7C</name>
</gene>
<accession>P25354</accession>
<accession>D6VR16</accession>
<accession>Q70DH1</accession>
<accession>Q70DH4</accession>
<accession>Q70DH6</accession>
<sequence>MQPHLDNNSNNDDVKLDTLGEQNVLSSAENITLPEDTFKSYMTYLLYEMAHYKPMIFSFLALSVSILIVVIFHNVKACDVVFGFSIFVTSILFLSTLIPFNVYISDEGFRIKLLLEVITHRPAVKGKEWRAITDNMNQYLLDNGLWSTRYYFYSSERCYKFFRFLVKEKPPGVNVNSSVKDATSTQIDAPANEASNEVIKCFSFSSDPIFEAYFVKAVEVEKQAQQEYWRKQYPDADIP</sequence>
<comment type="subunit">
    <text evidence="4">Interacts according to large scale protein interaction studies with MEC3 and ULP1.</text>
</comment>
<comment type="subcellular location">
    <subcellularLocation>
        <location evidence="4">Membrane</location>
        <topology evidence="4">Multi-pass membrane protein</topology>
    </subcellularLocation>
</comment>
<comment type="disruption phenotype">
    <text evidence="2">Cells lacking all 10 proteins of the DUP240 multigene family show no obvious alterations in mating, sporulation and cell growth.</text>
</comment>
<comment type="similarity">
    <text evidence="4">Belongs to the DUP/COS family.</text>
</comment>
<name>YCP7_YEAST</name>
<proteinExistence type="evidence at protein level"/>
<reference key="1">
    <citation type="journal article" date="2004" name="Nucleic Acids Res.">
        <title>Differential evolution of the Saccharomyces cerevisiae DUP240 paralogs and implication of recombination in phylogeny.</title>
        <authorList>
            <person name="Leh-Louis V."/>
            <person name="Wirth B."/>
            <person name="Despons L."/>
            <person name="Wain-Hobson S."/>
            <person name="Potier S."/>
            <person name="Souciet J.-L."/>
        </authorList>
    </citation>
    <scope>NUCLEOTIDE SEQUENCE [GENOMIC DNA]</scope>
    <scope>VARIANTS LYS-2; THR-42 AND ILE-215</scope>
    <source>
        <strain>CLIB 219</strain>
        <strain>CLIB 382</strain>
        <strain>CLIB 388</strain>
        <strain>CLIB 410</strain>
        <strain>CLIB 413</strain>
        <strain>CLIB 556</strain>
        <strain>CLIB 630</strain>
        <strain>CLIB 95</strain>
        <strain>K1</strain>
        <strain>R12</strain>
        <strain>R13</strain>
        <strain>Sigma 1278B</strain>
        <strain>YIIc12</strain>
        <strain>YIIc17</strain>
    </source>
</reference>
<reference key="2">
    <citation type="journal article" date="1992" name="Yeast">
        <title>The complete sequence of a 10.8kb fragment to the right of the chromosome III centromere of Saccharomyces cerevisiae.</title>
        <authorList>
            <person name="Biteau N."/>
            <person name="Fremaux C."/>
            <person name="Hebrard S."/>
            <person name="Menara A."/>
            <person name="Aigle M."/>
            <person name="Crouzet M."/>
        </authorList>
    </citation>
    <scope>NUCLEOTIDE SEQUENCE [GENOMIC DNA]</scope>
</reference>
<reference key="3">
    <citation type="journal article" date="1992" name="Nature">
        <title>The complete DNA sequence of yeast chromosome III.</title>
        <authorList>
            <person name="Oliver S.G."/>
            <person name="van der Aart Q.J.M."/>
            <person name="Agostoni-Carbone M.L."/>
            <person name="Aigle M."/>
            <person name="Alberghina L."/>
            <person name="Alexandraki D."/>
            <person name="Antoine G."/>
            <person name="Anwar R."/>
            <person name="Ballesta J.P.G."/>
            <person name="Benit P."/>
            <person name="Berben G."/>
            <person name="Bergantino E."/>
            <person name="Biteau N."/>
            <person name="Bolle P.-A."/>
            <person name="Bolotin-Fukuhara M."/>
            <person name="Brown A."/>
            <person name="Brown A.J.P."/>
            <person name="Buhler J.-M."/>
            <person name="Carcano C."/>
            <person name="Carignani G."/>
            <person name="Cederberg H."/>
            <person name="Chanet R."/>
            <person name="Contreras R."/>
            <person name="Crouzet M."/>
            <person name="Daignan-Fornier B."/>
            <person name="Defoor E."/>
            <person name="Delgado M.D."/>
            <person name="Demolder J."/>
            <person name="Doira C."/>
            <person name="Dubois E."/>
            <person name="Dujon B."/>
            <person name="Duesterhoeft A."/>
            <person name="Erdmann D."/>
            <person name="Esteban M."/>
            <person name="Fabre F."/>
            <person name="Fairhead C."/>
            <person name="Faye G."/>
            <person name="Feldmann H."/>
            <person name="Fiers W."/>
            <person name="Francingues-Gaillard M.-C."/>
            <person name="Franco L."/>
            <person name="Frontali L."/>
            <person name="Fukuhara H."/>
            <person name="Fuller L.J."/>
            <person name="Galland P."/>
            <person name="Gent M.E."/>
            <person name="Gigot D."/>
            <person name="Gilliquet V."/>
            <person name="Glansdorff N."/>
            <person name="Goffeau A."/>
            <person name="Grenson M."/>
            <person name="Grisanti P."/>
            <person name="Grivell L.A."/>
            <person name="de Haan M."/>
            <person name="Haasemann M."/>
            <person name="Hatat D."/>
            <person name="Hoenicka J."/>
            <person name="Hegemann J.H."/>
            <person name="Herbert C.J."/>
            <person name="Hilger F."/>
            <person name="Hohmann S."/>
            <person name="Hollenberg C.P."/>
            <person name="Huse K."/>
            <person name="Iborra F."/>
            <person name="Indge K.J."/>
            <person name="Isono K."/>
            <person name="Jacq C."/>
            <person name="Jacquet M."/>
            <person name="James C.M."/>
            <person name="Jauniaux J.-C."/>
            <person name="Jia Y."/>
            <person name="Jimenez A."/>
            <person name="Kelly A."/>
            <person name="Kleinhans U."/>
            <person name="Kreisl P."/>
            <person name="Lanfranchi G."/>
            <person name="Lewis C."/>
            <person name="van der Linden C.G."/>
            <person name="Lucchini G."/>
            <person name="Lutzenkirchen K."/>
            <person name="Maat M.J."/>
            <person name="Mallet L."/>
            <person name="Mannhaupt G."/>
            <person name="Martegani E."/>
            <person name="Mathieu A."/>
            <person name="Maurer C.T.C."/>
            <person name="McConnell D."/>
            <person name="McKee R.A."/>
            <person name="Messenguy F."/>
            <person name="Mewes H.-W."/>
            <person name="Molemans F."/>
            <person name="Montague M.A."/>
            <person name="Muzi Falconi M."/>
            <person name="Navas L."/>
            <person name="Newlon C.S."/>
            <person name="Noone D."/>
            <person name="Pallier C."/>
            <person name="Panzeri L."/>
            <person name="Pearson B.M."/>
            <person name="Perea J."/>
            <person name="Philippsen P."/>
            <person name="Pierard A."/>
            <person name="Planta R.J."/>
            <person name="Plevani P."/>
            <person name="Poetsch B."/>
            <person name="Pohl F.M."/>
            <person name="Purnelle B."/>
            <person name="Ramezani Rad M."/>
            <person name="Rasmussen S.W."/>
            <person name="Raynal A."/>
            <person name="Remacha M.A."/>
            <person name="Richterich P."/>
            <person name="Roberts A.B."/>
            <person name="Rodriguez F."/>
            <person name="Sanz E."/>
            <person name="Schaaff-Gerstenschlaeger I."/>
            <person name="Scherens B."/>
            <person name="Schweitzer B."/>
            <person name="Shu Y."/>
            <person name="Skala J."/>
            <person name="Slonimski P.P."/>
            <person name="Sor F."/>
            <person name="Soustelle C."/>
            <person name="Spiegelberg R."/>
            <person name="Stateva L.I."/>
            <person name="Steensma H.Y."/>
            <person name="Steiner S."/>
            <person name="Thierry A."/>
            <person name="Thireos G."/>
            <person name="Tzermia M."/>
            <person name="Urrestarazu L.A."/>
            <person name="Valle G."/>
            <person name="Vetter I."/>
            <person name="van Vliet-Reedijk J.C."/>
            <person name="Voet M."/>
            <person name="Volckaert G."/>
            <person name="Vreken P."/>
            <person name="Wang H."/>
            <person name="Warmington J.R."/>
            <person name="von Wettstein D."/>
            <person name="Wicksteed B.L."/>
            <person name="Wilson C."/>
            <person name="Wurst H."/>
            <person name="Xu G."/>
            <person name="Yoshikawa A."/>
            <person name="Zimmermann F.K."/>
            <person name="Sgouros J.G."/>
        </authorList>
    </citation>
    <scope>NUCLEOTIDE SEQUENCE [LARGE SCALE GENOMIC DNA]</scope>
    <source>
        <strain>ATCC 204508 / S288c</strain>
    </source>
</reference>
<reference key="4">
    <citation type="journal article" date="2014" name="G3 (Bethesda)">
        <title>The reference genome sequence of Saccharomyces cerevisiae: Then and now.</title>
        <authorList>
            <person name="Engel S.R."/>
            <person name="Dietrich F.S."/>
            <person name="Fisk D.G."/>
            <person name="Binkley G."/>
            <person name="Balakrishnan R."/>
            <person name="Costanzo M.C."/>
            <person name="Dwight S.S."/>
            <person name="Hitz B.C."/>
            <person name="Karra K."/>
            <person name="Nash R.S."/>
            <person name="Weng S."/>
            <person name="Wong E.D."/>
            <person name="Lloyd P."/>
            <person name="Skrzypek M.S."/>
            <person name="Miyasato S.R."/>
            <person name="Simison M."/>
            <person name="Cherry J.M."/>
        </authorList>
    </citation>
    <scope>GENOME REANNOTATION</scope>
    <source>
        <strain>ATCC 204508 / S288c</strain>
    </source>
</reference>
<reference key="5">
    <citation type="journal article" date="2007" name="Genome Res.">
        <title>Approaching a complete repository of sequence-verified protein-encoding clones for Saccharomyces cerevisiae.</title>
        <authorList>
            <person name="Hu Y."/>
            <person name="Rolfs A."/>
            <person name="Bhullar B."/>
            <person name="Murthy T.V.S."/>
            <person name="Zhu C."/>
            <person name="Berger M.F."/>
            <person name="Camargo A.A."/>
            <person name="Kelley F."/>
            <person name="McCarron S."/>
            <person name="Jepson D."/>
            <person name="Richardson A."/>
            <person name="Raphael J."/>
            <person name="Moreira D."/>
            <person name="Taycher E."/>
            <person name="Zuo D."/>
            <person name="Mohr S."/>
            <person name="Kane M.F."/>
            <person name="Williamson J."/>
            <person name="Simpson A.J.G."/>
            <person name="Bulyk M.L."/>
            <person name="Harlow E."/>
            <person name="Marsischky G."/>
            <person name="Kolodner R.D."/>
            <person name="LaBaer J."/>
        </authorList>
    </citation>
    <scope>NUCLEOTIDE SEQUENCE [GENOMIC DNA]</scope>
    <source>
        <strain>ATCC 204508 / S288c</strain>
    </source>
</reference>
<reference key="6">
    <citation type="journal article" date="2001" name="Proc. Natl. Acad. Sci. U.S.A.">
        <title>A comprehensive two-hybrid analysis to explore the yeast protein interactome.</title>
        <authorList>
            <person name="Ito T."/>
            <person name="Chiba T."/>
            <person name="Ozawa R."/>
            <person name="Yoshida M."/>
            <person name="Hattori M."/>
            <person name="Sakaki Y."/>
        </authorList>
    </citation>
    <scope>INTERACTION WITH MEC3 AND ULP1</scope>
</reference>
<reference key="7">
    <citation type="journal article" date="2002" name="Microbiology">
        <title>Functional analysis of the Saccharomyces cerevisiae DUP240 multigene family reveals membrane-associated proteins that are not essential for cell viability.</title>
        <authorList>
            <person name="Poirey R."/>
            <person name="Despons L."/>
            <person name="Leh V."/>
            <person name="Lafuente M.-J."/>
            <person name="Potier S."/>
            <person name="Souciet J.-L."/>
            <person name="Jauniaux J.-C."/>
        </authorList>
    </citation>
    <scope>DISRUPTION PHENOTYPE</scope>
</reference>
<reference key="8">
    <citation type="journal article" date="2006" name="Proc. Natl. Acad. Sci. U.S.A.">
        <title>A global topology map of the Saccharomyces cerevisiae membrane proteome.</title>
        <authorList>
            <person name="Kim H."/>
            <person name="Melen K."/>
            <person name="Oesterberg M."/>
            <person name="von Heijne G."/>
        </authorList>
    </citation>
    <scope>TOPOLOGY [LARGE SCALE ANALYSIS]</scope>
    <source>
        <strain>ATCC 208353 / W303-1A</strain>
    </source>
</reference>
<protein>
    <recommendedName>
        <fullName>DUP240 protein DFP3</fullName>
    </recommendedName>
</protein>
<keyword id="KW-0472">Membrane</keyword>
<keyword id="KW-1185">Reference proteome</keyword>
<keyword id="KW-0812">Transmembrane</keyword>
<keyword id="KW-1133">Transmembrane helix</keyword>
<feature type="chain" id="PRO_0000207531" description="DUP240 protein DFP3">
    <location>
        <begin position="1"/>
        <end position="239"/>
    </location>
</feature>
<feature type="topological domain" description="Cytoplasmic" evidence="1">
    <location>
        <begin position="1"/>
        <end position="54"/>
    </location>
</feature>
<feature type="transmembrane region" description="Helical" evidence="1">
    <location>
        <begin position="55"/>
        <end position="75"/>
    </location>
</feature>
<feature type="topological domain" description="Extracellular" evidence="1">
    <location>
        <begin position="76"/>
        <end position="79"/>
    </location>
</feature>
<feature type="transmembrane region" description="Helical" evidence="1">
    <location>
        <begin position="80"/>
        <end position="104"/>
    </location>
</feature>
<feature type="topological domain" description="Cytoplasmic" evidence="1">
    <location>
        <begin position="105"/>
        <end position="239"/>
    </location>
</feature>
<feature type="sequence variant" description="In strain: CLIB 219." evidence="3">
    <original>Q</original>
    <variation>K</variation>
    <location>
        <position position="2"/>
    </location>
</feature>
<feature type="sequence variant" description="In strain: CLIB 219, CLIB 410, CLIB 413, CLIB 630 haplotype Ha1, K1, YIIc12 haplotype Ha2 and CLIB 382." evidence="3">
    <original>M</original>
    <variation>T</variation>
    <location>
        <position position="42"/>
    </location>
</feature>
<feature type="sequence variant" description="In strain: CLIB 630." evidence="3">
    <original>V</original>
    <variation>I</variation>
    <location>
        <position position="215"/>
    </location>
</feature>
<dbReference type="EMBL" id="AJ585549">
    <property type="protein sequence ID" value="CAE52069.1"/>
    <property type="molecule type" value="Genomic_DNA"/>
</dbReference>
<dbReference type="EMBL" id="AJ585550">
    <property type="protein sequence ID" value="CAE52070.1"/>
    <property type="molecule type" value="Genomic_DNA"/>
</dbReference>
<dbReference type="EMBL" id="AJ585551">
    <property type="protein sequence ID" value="CAE52071.1"/>
    <property type="molecule type" value="Genomic_DNA"/>
</dbReference>
<dbReference type="EMBL" id="AJ585552">
    <property type="protein sequence ID" value="CAE52072.1"/>
    <property type="molecule type" value="Genomic_DNA"/>
</dbReference>
<dbReference type="EMBL" id="AJ585553">
    <property type="protein sequence ID" value="CAE52073.1"/>
    <property type="molecule type" value="Genomic_DNA"/>
</dbReference>
<dbReference type="EMBL" id="AJ585554">
    <property type="protein sequence ID" value="CAE52074.1"/>
    <property type="molecule type" value="Genomic_DNA"/>
</dbReference>
<dbReference type="EMBL" id="AJ585555">
    <property type="protein sequence ID" value="CAE52075.1"/>
    <property type="molecule type" value="Genomic_DNA"/>
</dbReference>
<dbReference type="EMBL" id="AJ585556">
    <property type="protein sequence ID" value="CAE52076.1"/>
    <property type="molecule type" value="Genomic_DNA"/>
</dbReference>
<dbReference type="EMBL" id="AJ585557">
    <property type="protein sequence ID" value="CAE52077.1"/>
    <property type="molecule type" value="Genomic_DNA"/>
</dbReference>
<dbReference type="EMBL" id="AJ585558">
    <property type="protein sequence ID" value="CAE52078.1"/>
    <property type="molecule type" value="Genomic_DNA"/>
</dbReference>
<dbReference type="EMBL" id="AJ585559">
    <property type="protein sequence ID" value="CAE52079.1"/>
    <property type="molecule type" value="Genomic_DNA"/>
</dbReference>
<dbReference type="EMBL" id="AJ585560">
    <property type="protein sequence ID" value="CAE52080.1"/>
    <property type="molecule type" value="Genomic_DNA"/>
</dbReference>
<dbReference type="EMBL" id="AJ585561">
    <property type="protein sequence ID" value="CAE52081.1"/>
    <property type="molecule type" value="Genomic_DNA"/>
</dbReference>
<dbReference type="EMBL" id="AJ585562">
    <property type="protein sequence ID" value="CAE52082.1"/>
    <property type="molecule type" value="Genomic_DNA"/>
</dbReference>
<dbReference type="EMBL" id="AJ585563">
    <property type="protein sequence ID" value="CAE52083.1"/>
    <property type="molecule type" value="Genomic_DNA"/>
</dbReference>
<dbReference type="EMBL" id="AJ585564">
    <property type="protein sequence ID" value="CAE52084.1"/>
    <property type="molecule type" value="Genomic_DNA"/>
</dbReference>
<dbReference type="EMBL" id="Z11114">
    <property type="protein sequence ID" value="CAA77446.1"/>
    <property type="molecule type" value="Genomic_DNA"/>
</dbReference>
<dbReference type="EMBL" id="X59720">
    <property type="protein sequence ID" value="CAA42324.1"/>
    <property type="molecule type" value="Genomic_DNA"/>
</dbReference>
<dbReference type="EMBL" id="AY558149">
    <property type="protein sequence ID" value="AAS56475.1"/>
    <property type="molecule type" value="Genomic_DNA"/>
</dbReference>
<dbReference type="EMBL" id="BK006937">
    <property type="protein sequence ID" value="DAA07485.1"/>
    <property type="molecule type" value="Genomic_DNA"/>
</dbReference>
<dbReference type="PIR" id="S20184">
    <property type="entry name" value="S20184"/>
</dbReference>
<dbReference type="RefSeq" id="NP_009933.1">
    <property type="nucleotide sequence ID" value="NM_001178720.1"/>
</dbReference>
<dbReference type="BioGRID" id="30985">
    <property type="interactions" value="64"/>
</dbReference>
<dbReference type="DIP" id="DIP-4043N"/>
<dbReference type="FunCoup" id="P25354">
    <property type="interactions" value="47"/>
</dbReference>
<dbReference type="IntAct" id="P25354">
    <property type="interactions" value="8"/>
</dbReference>
<dbReference type="MINT" id="P25354"/>
<dbReference type="STRING" id="4932.YCR007C"/>
<dbReference type="iPTMnet" id="P25354"/>
<dbReference type="PaxDb" id="4932-YCR007C"/>
<dbReference type="PeptideAtlas" id="P25354"/>
<dbReference type="EnsemblFungi" id="YCR007C_mRNA">
    <property type="protein sequence ID" value="YCR007C"/>
    <property type="gene ID" value="YCR007C"/>
</dbReference>
<dbReference type="GeneID" id="850364"/>
<dbReference type="KEGG" id="sce:YCR007C"/>
<dbReference type="AGR" id="SGD:S000000600"/>
<dbReference type="SGD" id="S000000600">
    <property type="gene designation" value="DFP3"/>
</dbReference>
<dbReference type="VEuPathDB" id="FungiDB:YCR007C"/>
<dbReference type="eggNOG" id="ENOG502SSNW">
    <property type="taxonomic scope" value="Eukaryota"/>
</dbReference>
<dbReference type="GeneTree" id="ENSGT00940000176285"/>
<dbReference type="HOGENOM" id="CLU_081384_0_1_1"/>
<dbReference type="InParanoid" id="P25354"/>
<dbReference type="OMA" id="QADICDW"/>
<dbReference type="OrthoDB" id="4040223at2759"/>
<dbReference type="BioCyc" id="YEAST:G3O-29324-MONOMER"/>
<dbReference type="BioGRID-ORCS" id="850364">
    <property type="hits" value="0 hits in 10 CRISPR screens"/>
</dbReference>
<dbReference type="PRO" id="PR:P25354"/>
<dbReference type="Proteomes" id="UP000002311">
    <property type="component" value="Chromosome III"/>
</dbReference>
<dbReference type="RNAct" id="P25354">
    <property type="molecule type" value="protein"/>
</dbReference>
<dbReference type="GO" id="GO:0071944">
    <property type="term" value="C:cell periphery"/>
    <property type="evidence" value="ECO:0007005"/>
    <property type="project" value="SGD"/>
</dbReference>
<dbReference type="GO" id="GO:0000324">
    <property type="term" value="C:fungal-type vacuole"/>
    <property type="evidence" value="ECO:0007005"/>
    <property type="project" value="SGD"/>
</dbReference>
<dbReference type="GO" id="GO:0016020">
    <property type="term" value="C:membrane"/>
    <property type="evidence" value="ECO:0007669"/>
    <property type="project" value="UniProtKB-SubCell"/>
</dbReference>
<dbReference type="InterPro" id="IPR001142">
    <property type="entry name" value="DUP/COS"/>
</dbReference>
<dbReference type="Pfam" id="PF00674">
    <property type="entry name" value="DUP"/>
    <property type="match status" value="1"/>
</dbReference>
<organism>
    <name type="scientific">Saccharomyces cerevisiae (strain ATCC 204508 / S288c)</name>
    <name type="common">Baker's yeast</name>
    <dbReference type="NCBI Taxonomy" id="559292"/>
    <lineage>
        <taxon>Eukaryota</taxon>
        <taxon>Fungi</taxon>
        <taxon>Dikarya</taxon>
        <taxon>Ascomycota</taxon>
        <taxon>Saccharomycotina</taxon>
        <taxon>Saccharomycetes</taxon>
        <taxon>Saccharomycetales</taxon>
        <taxon>Saccharomycetaceae</taxon>
        <taxon>Saccharomyces</taxon>
    </lineage>
</organism>
<evidence type="ECO:0000255" key="1"/>
<evidence type="ECO:0000269" key="2">
    <source>
    </source>
</evidence>
<evidence type="ECO:0000269" key="3">
    <source>
    </source>
</evidence>
<evidence type="ECO:0000305" key="4"/>
<evidence type="ECO:0000312" key="5">
    <source>
        <dbReference type="SGD" id="S000000600"/>
    </source>
</evidence>